<name>RPO11_METJA</name>
<gene>
    <name evidence="1" type="primary">rpo11</name>
    <name evidence="1" type="synonym">rpoL</name>
    <name type="ordered locus">MJ0387</name>
</gene>
<sequence length="99" mass="11392">MEIKILERKDNLVEIELINEDHSLPNLLKDILLTKEGVKMASYSIDHPLLHPETGRYISNPKITIITEEGTDPLEVLKEGLRDIIKMCDTLLDELKEKK</sequence>
<evidence type="ECO:0000255" key="1">
    <source>
        <dbReference type="HAMAP-Rule" id="MF_00261"/>
    </source>
</evidence>
<evidence type="ECO:0000269" key="2">
    <source>
    </source>
</evidence>
<evidence type="ECO:0000303" key="3">
    <source>
    </source>
</evidence>
<proteinExistence type="evidence at protein level"/>
<feature type="chain" id="PRO_0000149326" description="DNA-directed RNA polymerase subunit Rpo11">
    <location>
        <begin position="1"/>
        <end position="99"/>
    </location>
</feature>
<accession>Q57832</accession>
<reference key="1">
    <citation type="journal article" date="1996" name="Science">
        <title>Complete genome sequence of the methanogenic archaeon, Methanococcus jannaschii.</title>
        <authorList>
            <person name="Bult C.J."/>
            <person name="White O."/>
            <person name="Olsen G.J."/>
            <person name="Zhou L."/>
            <person name="Fleischmann R.D."/>
            <person name="Sutton G.G."/>
            <person name="Blake J.A."/>
            <person name="FitzGerald L.M."/>
            <person name="Clayton R.A."/>
            <person name="Gocayne J.D."/>
            <person name="Kerlavage A.R."/>
            <person name="Dougherty B.A."/>
            <person name="Tomb J.-F."/>
            <person name="Adams M.D."/>
            <person name="Reich C.I."/>
            <person name="Overbeek R."/>
            <person name="Kirkness E.F."/>
            <person name="Weinstock K.G."/>
            <person name="Merrick J.M."/>
            <person name="Glodek A."/>
            <person name="Scott J.L."/>
            <person name="Geoghagen N.S.M."/>
            <person name="Weidman J.F."/>
            <person name="Fuhrmann J.L."/>
            <person name="Nguyen D."/>
            <person name="Utterback T.R."/>
            <person name="Kelley J.M."/>
            <person name="Peterson J.D."/>
            <person name="Sadow P.W."/>
            <person name="Hanna M.C."/>
            <person name="Cotton M.D."/>
            <person name="Roberts K.M."/>
            <person name="Hurst M.A."/>
            <person name="Kaine B.P."/>
            <person name="Borodovsky M."/>
            <person name="Klenk H.-P."/>
            <person name="Fraser C.M."/>
            <person name="Smith H.O."/>
            <person name="Woese C.R."/>
            <person name="Venter J.C."/>
        </authorList>
    </citation>
    <scope>NUCLEOTIDE SEQUENCE [LARGE SCALE GENOMIC DNA]</scope>
    <source>
        <strain>ATCC 43067 / DSM 2661 / JAL-1 / JCM 10045 / NBRC 100440</strain>
    </source>
</reference>
<reference key="2">
    <citation type="journal article" date="2000" name="Nucleic Acids Res.">
        <title>Archaeal RNA polymerase subunits F and P are bona fide homologs of eukaryotic RPB4 and RPB12.</title>
        <authorList>
            <person name="Werner F."/>
            <person name="Eloranta J.J."/>
            <person name="Weinzierl R.O."/>
        </authorList>
    </citation>
    <scope>SUBUNIT</scope>
</reference>
<protein>
    <recommendedName>
        <fullName evidence="1">DNA-directed RNA polymerase subunit Rpo11</fullName>
        <ecNumber evidence="1">2.7.7.6</ecNumber>
    </recommendedName>
    <alternativeName>
        <fullName evidence="1">DNA-directed RNA polymerase subunit L</fullName>
        <shortName evidence="3">mjL</shortName>
    </alternativeName>
</protein>
<keyword id="KW-0963">Cytoplasm</keyword>
<keyword id="KW-0240">DNA-directed RNA polymerase</keyword>
<keyword id="KW-0548">Nucleotidyltransferase</keyword>
<keyword id="KW-1185">Reference proteome</keyword>
<keyword id="KW-0804">Transcription</keyword>
<keyword id="KW-0808">Transferase</keyword>
<comment type="function">
    <text evidence="1">DNA-dependent RNA polymerase (RNAP) catalyzes the transcription of DNA into RNA using the four ribonucleoside triphosphates as substrates.</text>
</comment>
<comment type="catalytic activity">
    <reaction evidence="1">
        <text>RNA(n) + a ribonucleoside 5'-triphosphate = RNA(n+1) + diphosphate</text>
        <dbReference type="Rhea" id="RHEA:21248"/>
        <dbReference type="Rhea" id="RHEA-COMP:14527"/>
        <dbReference type="Rhea" id="RHEA-COMP:17342"/>
        <dbReference type="ChEBI" id="CHEBI:33019"/>
        <dbReference type="ChEBI" id="CHEBI:61557"/>
        <dbReference type="ChEBI" id="CHEBI:140395"/>
        <dbReference type="EC" id="2.7.7.6"/>
    </reaction>
</comment>
<comment type="subunit">
    <text evidence="1 2">Part of the RNA polymerase complex (By similarity). Forms an Rpo3-Rpo10-Rpo11-Rpo12 complex upon coexpression (PubMed:11058130).</text>
</comment>
<comment type="interaction">
    <interactant intactId="EBI-2567038">
        <id>Q57832</id>
    </interactant>
    <interactant intactId="EBI-2567023">
        <id>Q57648</id>
        <label>rpo3</label>
    </interactant>
    <organismsDiffer>false</organismsDiffer>
    <experiments>3</experiments>
</comment>
<comment type="subcellular location">
    <subcellularLocation>
        <location evidence="1">Cytoplasm</location>
    </subcellularLocation>
</comment>
<comment type="similarity">
    <text evidence="1">Belongs to the archaeal Rpo11/eukaryotic RPB11/RPC19 RNA polymerase subunit family.</text>
</comment>
<dbReference type="EC" id="2.7.7.6" evidence="1"/>
<dbReference type="EMBL" id="L77117">
    <property type="protein sequence ID" value="AAB98373.1"/>
    <property type="molecule type" value="Genomic_DNA"/>
</dbReference>
<dbReference type="PIR" id="C64348">
    <property type="entry name" value="C64348"/>
</dbReference>
<dbReference type="RefSeq" id="WP_010869886.1">
    <property type="nucleotide sequence ID" value="NC_000909.1"/>
</dbReference>
<dbReference type="SMR" id="Q57832"/>
<dbReference type="FunCoup" id="Q57832">
    <property type="interactions" value="11"/>
</dbReference>
<dbReference type="IntAct" id="Q57832">
    <property type="interactions" value="1"/>
</dbReference>
<dbReference type="STRING" id="243232.MJ_0387"/>
<dbReference type="PaxDb" id="243232-MJ_0387"/>
<dbReference type="EnsemblBacteria" id="AAB98373">
    <property type="protein sequence ID" value="AAB98373"/>
    <property type="gene ID" value="MJ_0387"/>
</dbReference>
<dbReference type="GeneID" id="1451244"/>
<dbReference type="KEGG" id="mja:MJ_0387"/>
<dbReference type="eggNOG" id="arCOG04111">
    <property type="taxonomic scope" value="Archaea"/>
</dbReference>
<dbReference type="HOGENOM" id="CLU_090381_5_0_2"/>
<dbReference type="InParanoid" id="Q57832"/>
<dbReference type="OrthoDB" id="24205at2157"/>
<dbReference type="PhylomeDB" id="Q57832"/>
<dbReference type="Proteomes" id="UP000000805">
    <property type="component" value="Chromosome"/>
</dbReference>
<dbReference type="GO" id="GO:0005737">
    <property type="term" value="C:cytoplasm"/>
    <property type="evidence" value="ECO:0007669"/>
    <property type="project" value="UniProtKB-SubCell"/>
</dbReference>
<dbReference type="GO" id="GO:0000428">
    <property type="term" value="C:DNA-directed RNA polymerase complex"/>
    <property type="evidence" value="ECO:0007669"/>
    <property type="project" value="UniProtKB-KW"/>
</dbReference>
<dbReference type="GO" id="GO:0003677">
    <property type="term" value="F:DNA binding"/>
    <property type="evidence" value="ECO:0007669"/>
    <property type="project" value="InterPro"/>
</dbReference>
<dbReference type="GO" id="GO:0003899">
    <property type="term" value="F:DNA-directed RNA polymerase activity"/>
    <property type="evidence" value="ECO:0007669"/>
    <property type="project" value="UniProtKB-UniRule"/>
</dbReference>
<dbReference type="GO" id="GO:0046983">
    <property type="term" value="F:protein dimerization activity"/>
    <property type="evidence" value="ECO:0007669"/>
    <property type="project" value="InterPro"/>
</dbReference>
<dbReference type="GO" id="GO:0006351">
    <property type="term" value="P:DNA-templated transcription"/>
    <property type="evidence" value="ECO:0007669"/>
    <property type="project" value="UniProtKB-UniRule"/>
</dbReference>
<dbReference type="CDD" id="cd06927">
    <property type="entry name" value="RNAP_L"/>
    <property type="match status" value="1"/>
</dbReference>
<dbReference type="Gene3D" id="3.30.1360.10">
    <property type="entry name" value="RNA polymerase, RBP11-like subunit"/>
    <property type="match status" value="1"/>
</dbReference>
<dbReference type="HAMAP" id="MF_00261">
    <property type="entry name" value="RNApol_arch_Rpo11"/>
    <property type="match status" value="1"/>
</dbReference>
<dbReference type="InterPro" id="IPR036603">
    <property type="entry name" value="RBP11-like"/>
</dbReference>
<dbReference type="InterPro" id="IPR009025">
    <property type="entry name" value="RBP11-like_dimer"/>
</dbReference>
<dbReference type="InterPro" id="IPR008193">
    <property type="entry name" value="RNA_pol_Rpb11_13-16kDa_CS"/>
</dbReference>
<dbReference type="InterPro" id="IPR022905">
    <property type="entry name" value="Rpo11-like"/>
</dbReference>
<dbReference type="NCBIfam" id="NF002234">
    <property type="entry name" value="PRK01146.1-2"/>
    <property type="match status" value="1"/>
</dbReference>
<dbReference type="PANTHER" id="PTHR13946">
    <property type="entry name" value="DNA-DIRECTED RNA POLYMERASE I,II,III"/>
    <property type="match status" value="1"/>
</dbReference>
<dbReference type="PANTHER" id="PTHR13946:SF28">
    <property type="entry name" value="DNA-DIRECTED RNA POLYMERASES I AND III SUBUNIT RPAC2"/>
    <property type="match status" value="1"/>
</dbReference>
<dbReference type="Pfam" id="PF13656">
    <property type="entry name" value="RNA_pol_L_2"/>
    <property type="match status" value="1"/>
</dbReference>
<dbReference type="SUPFAM" id="SSF55257">
    <property type="entry name" value="RBP11-like subunits of RNA polymerase"/>
    <property type="match status" value="1"/>
</dbReference>
<dbReference type="PROSITE" id="PS01154">
    <property type="entry name" value="RNA_POL_L_13KD"/>
    <property type="match status" value="1"/>
</dbReference>
<organism>
    <name type="scientific">Methanocaldococcus jannaschii (strain ATCC 43067 / DSM 2661 / JAL-1 / JCM 10045 / NBRC 100440)</name>
    <name type="common">Methanococcus jannaschii</name>
    <dbReference type="NCBI Taxonomy" id="243232"/>
    <lineage>
        <taxon>Archaea</taxon>
        <taxon>Methanobacteriati</taxon>
        <taxon>Methanobacteriota</taxon>
        <taxon>Methanomada group</taxon>
        <taxon>Methanococci</taxon>
        <taxon>Methanococcales</taxon>
        <taxon>Methanocaldococcaceae</taxon>
        <taxon>Methanocaldococcus</taxon>
    </lineage>
</organism>